<organism>
    <name type="scientific">Oryctolagus cuniculus</name>
    <name type="common">Rabbit</name>
    <dbReference type="NCBI Taxonomy" id="9986"/>
    <lineage>
        <taxon>Eukaryota</taxon>
        <taxon>Metazoa</taxon>
        <taxon>Chordata</taxon>
        <taxon>Craniata</taxon>
        <taxon>Vertebrata</taxon>
        <taxon>Euteleostomi</taxon>
        <taxon>Mammalia</taxon>
        <taxon>Eutheria</taxon>
        <taxon>Euarchontoglires</taxon>
        <taxon>Glires</taxon>
        <taxon>Lagomorpha</taxon>
        <taxon>Leporidae</taxon>
        <taxon>Oryctolagus</taxon>
    </lineage>
</organism>
<gene>
    <name type="primary">MT-CO3</name>
    <name type="synonym">COIII</name>
    <name type="synonym">COXIII</name>
    <name type="synonym">MTCO3</name>
</gene>
<proteinExistence type="inferred from homology"/>
<name>COX3_RABIT</name>
<reference key="1">
    <citation type="journal article" date="1998" name="Genomics">
        <title>The complete mitochondrial DNA sequence of the rabbit, Oryctolagus cuniculus.</title>
        <authorList>
            <person name="Gissi C."/>
            <person name="Gullberg A."/>
            <person name="Arnason U."/>
        </authorList>
    </citation>
    <scope>NUCLEOTIDE SEQUENCE [LARGE SCALE GENOMIC DNA]</scope>
    <source>
        <strain evidence="4">Thorbecke</strain>
    </source>
</reference>
<geneLocation type="mitochondrion"/>
<sequence length="261" mass="29730">MTHQTHAYHMVNPSPWPLTGALSALLMTSGLAMWFHFNSPSLLLIGLVTNTLTMYQWWRDIVREGTFQGHHTPIVQKGLRYGMILFIISEVFFFAGFFWAFYHSSLAPTPELGGCWPPTGINPLNPLEVPLLNTSVLLASGVSITWAHHSLMEGNRKNMQQALAITILLGIYFTLLQASEYYETSFTISDGVYGSTFFMATGFHGLHVIIGSTFLTVCLLRQFNFHFTSNHHFGFEAAAWYWHFVDVVWLFLYVSIYWWGS</sequence>
<comment type="function">
    <text evidence="2">Component of the cytochrome c oxidase, the last enzyme in the mitochondrial electron transport chain which drives oxidative phosphorylation. The respiratory chain contains 3 multisubunit complexes succinate dehydrogenase (complex II, CII), ubiquinol-cytochrome c oxidoreductase (cytochrome b-c1 complex, complex III, CIII) and cytochrome c oxidase (complex IV, CIV), that cooperate to transfer electrons derived from NADH and succinate to molecular oxygen, creating an electrochemical gradient over the inner membrane that drives transmembrane transport and the ATP synthase. Cytochrome c oxidase is the component of the respiratory chain that catalyzes the reduction of oxygen to water. Electrons originating from reduced cytochrome c in the intermembrane space (IMS) are transferred via the dinuclear copper A center (CU(A)) of subunit 2 and heme A of subunit 1 to the active site in subunit 1, a binuclear center (BNC) formed by heme A3 and copper B (CU(B)). The BNC reduces molecular oxygen to 2 water molecules using 4 electrons from cytochrome c in the IMS and 4 protons from the mitochondrial matrix.</text>
</comment>
<comment type="catalytic activity">
    <reaction evidence="2">
        <text>4 Fe(II)-[cytochrome c] + O2 + 8 H(+)(in) = 4 Fe(III)-[cytochrome c] + 2 H2O + 4 H(+)(out)</text>
        <dbReference type="Rhea" id="RHEA:11436"/>
        <dbReference type="Rhea" id="RHEA-COMP:10350"/>
        <dbReference type="Rhea" id="RHEA-COMP:14399"/>
        <dbReference type="ChEBI" id="CHEBI:15377"/>
        <dbReference type="ChEBI" id="CHEBI:15378"/>
        <dbReference type="ChEBI" id="CHEBI:15379"/>
        <dbReference type="ChEBI" id="CHEBI:29033"/>
        <dbReference type="ChEBI" id="CHEBI:29034"/>
        <dbReference type="EC" id="7.1.1.9"/>
    </reaction>
    <physiologicalReaction direction="left-to-right" evidence="2">
        <dbReference type="Rhea" id="RHEA:11437"/>
    </physiologicalReaction>
</comment>
<comment type="subunit">
    <text evidence="1">Component of the cytochrome c oxidase (complex IV, CIV), a multisubunit enzyme composed of 14 subunits. The complex is composed of a catalytic core of 3 subunits MT-CO1, MT-CO2 and MT-CO3, encoded in the mitochondrial DNA, and 11 supernumerary subunits COX4I, COX5A, COX5B, COX6A, COX6B, COX6C, COX7A, COX7B, COX7C, COX8 and NDUFA4, which are encoded in the nuclear genome. The complex exists as a monomer or a dimer and forms supercomplexes (SCs) in the inner mitochondrial membrane with NADH-ubiquinone oxidoreductase (complex I, CI) and ubiquinol-cytochrome c oxidoreductase (cytochrome b-c1 complex, complex III, CIII), resulting in different assemblies (supercomplex SCI(1)III(2)IV(1) and megacomplex MCI(2)III(2)IV(2)).</text>
</comment>
<comment type="subcellular location">
    <subcellularLocation>
        <location evidence="1">Mitochondrion inner membrane</location>
        <topology evidence="1">Multi-pass membrane protein</topology>
    </subcellularLocation>
</comment>
<comment type="similarity">
    <text evidence="3">Belongs to the cytochrome c oxidase subunit 3 family.</text>
</comment>
<protein>
    <recommendedName>
        <fullName>Cytochrome c oxidase subunit 3</fullName>
        <ecNumber>7.1.1.9</ecNumber>
    </recommendedName>
    <alternativeName>
        <fullName>Cytochrome c oxidase polypeptide III</fullName>
    </alternativeName>
</protein>
<feature type="chain" id="PRO_0000183841" description="Cytochrome c oxidase subunit 3">
    <location>
        <begin position="1"/>
        <end position="261"/>
    </location>
</feature>
<feature type="topological domain" description="Mitochondrial matrix" evidence="1">
    <location>
        <begin position="1"/>
        <end position="15"/>
    </location>
</feature>
<feature type="transmembrane region" description="Helical; Name=I" evidence="1">
    <location>
        <begin position="16"/>
        <end position="34"/>
    </location>
</feature>
<feature type="topological domain" description="Mitochondrial intermembrane" evidence="1">
    <location>
        <begin position="35"/>
        <end position="40"/>
    </location>
</feature>
<feature type="transmembrane region" description="Helical; Name=II" evidence="1">
    <location>
        <begin position="41"/>
        <end position="66"/>
    </location>
</feature>
<feature type="topological domain" description="Mitochondrial matrix" evidence="1">
    <location>
        <begin position="67"/>
        <end position="72"/>
    </location>
</feature>
<feature type="transmembrane region" description="Helical; Name=III" evidence="1">
    <location>
        <begin position="73"/>
        <end position="105"/>
    </location>
</feature>
<feature type="topological domain" description="Mitochondrial intermembrane" evidence="1">
    <location>
        <begin position="106"/>
        <end position="128"/>
    </location>
</feature>
<feature type="transmembrane region" description="Helical; Name=IV" evidence="1">
    <location>
        <begin position="129"/>
        <end position="152"/>
    </location>
</feature>
<feature type="topological domain" description="Mitochondrial matrix" evidence="1">
    <location>
        <begin position="153"/>
        <end position="155"/>
    </location>
</feature>
<feature type="transmembrane region" description="Helical; Name=V" evidence="1">
    <location>
        <begin position="156"/>
        <end position="183"/>
    </location>
</feature>
<feature type="topological domain" description="Mitochondrial intermembrane" evidence="1">
    <location>
        <begin position="184"/>
        <end position="190"/>
    </location>
</feature>
<feature type="transmembrane region" description="Helical; Name=VI" evidence="1">
    <location>
        <begin position="191"/>
        <end position="223"/>
    </location>
</feature>
<feature type="topological domain" description="Mitochondrial matrix" evidence="1">
    <location>
        <begin position="224"/>
        <end position="232"/>
    </location>
</feature>
<feature type="transmembrane region" description="Helical; Name=VII" evidence="1">
    <location>
        <begin position="233"/>
        <end position="256"/>
    </location>
</feature>
<feature type="topological domain" description="Mitochondrial intermembrane" evidence="1">
    <location>
        <begin position="257"/>
        <end position="261"/>
    </location>
</feature>
<evidence type="ECO:0000250" key="1">
    <source>
        <dbReference type="UniProtKB" id="P00415"/>
    </source>
</evidence>
<evidence type="ECO:0000250" key="2">
    <source>
        <dbReference type="UniProtKB" id="P00420"/>
    </source>
</evidence>
<evidence type="ECO:0000305" key="3"/>
<evidence type="ECO:0000312" key="4">
    <source>
        <dbReference type="Proteomes" id="UP000001811"/>
    </source>
</evidence>
<dbReference type="EC" id="7.1.1.9"/>
<dbReference type="EMBL" id="AJ001588">
    <property type="protein sequence ID" value="CAA04853.1"/>
    <property type="molecule type" value="Genomic_DNA"/>
</dbReference>
<dbReference type="PIR" id="T11486">
    <property type="entry name" value="T11486"/>
</dbReference>
<dbReference type="RefSeq" id="NP_007555.1">
    <property type="nucleotide sequence ID" value="NC_001913.1"/>
</dbReference>
<dbReference type="SMR" id="O79433"/>
<dbReference type="FunCoup" id="O79433">
    <property type="interactions" value="48"/>
</dbReference>
<dbReference type="STRING" id="9986.ENSOCUP00000026185"/>
<dbReference type="PaxDb" id="9986-ENSOCUP00000026185"/>
<dbReference type="Ensembl" id="ENSOCUT00000033128.1">
    <property type="protein sequence ID" value="ENSOCUP00000026185.1"/>
    <property type="gene ID" value="ENSOCUG00000029103.1"/>
</dbReference>
<dbReference type="GeneID" id="808229"/>
<dbReference type="KEGG" id="ocu:808229"/>
<dbReference type="CTD" id="4514"/>
<dbReference type="eggNOG" id="KOG4664">
    <property type="taxonomic scope" value="Eukaryota"/>
</dbReference>
<dbReference type="GeneTree" id="ENSGT00390000013064"/>
<dbReference type="HOGENOM" id="CLU_044071_0_0_1"/>
<dbReference type="InParanoid" id="O79433"/>
<dbReference type="OMA" id="SIYWWGS"/>
<dbReference type="OrthoDB" id="10050457at2759"/>
<dbReference type="TreeFam" id="TF343435"/>
<dbReference type="Proteomes" id="UP000001811">
    <property type="component" value="Mitochondrion"/>
</dbReference>
<dbReference type="Bgee" id="ENSOCUG00000029103">
    <property type="expression patterns" value="Expressed in ovary and 16 other cell types or tissues"/>
</dbReference>
<dbReference type="ExpressionAtlas" id="O79433">
    <property type="expression patterns" value="baseline"/>
</dbReference>
<dbReference type="GO" id="GO:0005743">
    <property type="term" value="C:mitochondrial inner membrane"/>
    <property type="evidence" value="ECO:0007669"/>
    <property type="project" value="UniProtKB-SubCell"/>
</dbReference>
<dbReference type="GO" id="GO:0045277">
    <property type="term" value="C:respiratory chain complex IV"/>
    <property type="evidence" value="ECO:0000250"/>
    <property type="project" value="UniProtKB"/>
</dbReference>
<dbReference type="GO" id="GO:0004129">
    <property type="term" value="F:cytochrome-c oxidase activity"/>
    <property type="evidence" value="ECO:0007669"/>
    <property type="project" value="UniProtKB-EC"/>
</dbReference>
<dbReference type="GO" id="GO:0006123">
    <property type="term" value="P:mitochondrial electron transport, cytochrome c to oxygen"/>
    <property type="evidence" value="ECO:0007669"/>
    <property type="project" value="TreeGrafter"/>
</dbReference>
<dbReference type="GO" id="GO:0008535">
    <property type="term" value="P:respiratory chain complex IV assembly"/>
    <property type="evidence" value="ECO:0000250"/>
    <property type="project" value="UniProtKB"/>
</dbReference>
<dbReference type="CDD" id="cd01665">
    <property type="entry name" value="Cyt_c_Oxidase_III"/>
    <property type="match status" value="1"/>
</dbReference>
<dbReference type="FunFam" id="1.10.287.70:FF:000048">
    <property type="entry name" value="Cytochrome c oxidase subunit 3"/>
    <property type="match status" value="1"/>
</dbReference>
<dbReference type="FunFam" id="1.20.120.80:FF:000002">
    <property type="entry name" value="Cytochrome c oxidase subunit 3"/>
    <property type="match status" value="1"/>
</dbReference>
<dbReference type="Gene3D" id="1.10.287.70">
    <property type="match status" value="1"/>
</dbReference>
<dbReference type="Gene3D" id="1.20.120.80">
    <property type="entry name" value="Cytochrome c oxidase, subunit III, four-helix bundle"/>
    <property type="match status" value="1"/>
</dbReference>
<dbReference type="InterPro" id="IPR024791">
    <property type="entry name" value="Cyt_c/ubiquinol_Oxase_su3"/>
</dbReference>
<dbReference type="InterPro" id="IPR033945">
    <property type="entry name" value="Cyt_c_oxase_su3_dom"/>
</dbReference>
<dbReference type="InterPro" id="IPR000298">
    <property type="entry name" value="Cyt_c_oxidase-like_su3"/>
</dbReference>
<dbReference type="InterPro" id="IPR035973">
    <property type="entry name" value="Cyt_c_oxidase_su3-like_sf"/>
</dbReference>
<dbReference type="InterPro" id="IPR013833">
    <property type="entry name" value="Cyt_c_oxidase_su3_a-hlx"/>
</dbReference>
<dbReference type="PANTHER" id="PTHR11403:SF7">
    <property type="entry name" value="CYTOCHROME C OXIDASE SUBUNIT 3"/>
    <property type="match status" value="1"/>
</dbReference>
<dbReference type="PANTHER" id="PTHR11403">
    <property type="entry name" value="CYTOCHROME C OXIDASE SUBUNIT III"/>
    <property type="match status" value="1"/>
</dbReference>
<dbReference type="Pfam" id="PF00510">
    <property type="entry name" value="COX3"/>
    <property type="match status" value="1"/>
</dbReference>
<dbReference type="SUPFAM" id="SSF81452">
    <property type="entry name" value="Cytochrome c oxidase subunit III-like"/>
    <property type="match status" value="1"/>
</dbReference>
<dbReference type="PROSITE" id="PS50253">
    <property type="entry name" value="COX3"/>
    <property type="match status" value="1"/>
</dbReference>
<keyword id="KW-0472">Membrane</keyword>
<keyword id="KW-0496">Mitochondrion</keyword>
<keyword id="KW-0999">Mitochondrion inner membrane</keyword>
<keyword id="KW-1185">Reference proteome</keyword>
<keyword id="KW-1278">Translocase</keyword>
<keyword id="KW-0812">Transmembrane</keyword>
<keyword id="KW-1133">Transmembrane helix</keyword>
<accession>O79433</accession>